<evidence type="ECO:0000255" key="1">
    <source>
        <dbReference type="HAMAP-Rule" id="MF_00670"/>
    </source>
</evidence>
<sequence>MQTLNRRDFPGRSHPDKIIQFGEGNFLRAFVDWQIDLLNEHTDLNAGIVVIRPIDTDFPPSLSTQDGLYTAVIRGLNEQGEAVRESRLIRSVNREINIYRQFDDYLALARDANIRFMFSNTTEAGIAWNEADQFSDAPPSSFPAKLTRLLFERFEHFDGAADKGWVLLPCELIDYNGEALRELVLRYASHWQLPAAFTHWLTENNTFCSTLVDRIVTGYPRDEVAALQTELGYQDSFLDTAEYFYLFVIQGPQGLAQELRLDQLDLNVRIVDDIKPYKERKVAILNGAHTALVPVAYLSGLDTVGQTMDDAQISRFVEKTITEEIVPVLDLPEDELLSFSQAVLSRFRNPFIQHQLLSIALNGMTKFRTRILPQLLTYQQQKGQLPPRLTFALAALIAFYRGEREGQTYPLQDDAHWLERYSTLWNGVKHGDIALAELVNRVLSDANHWGQDLTAVPQLANQVTEQLQTILSRGMRAAVAAYS</sequence>
<accession>Q1CMJ9</accession>
<accession>C4GP05</accession>
<keyword id="KW-0520">NAD</keyword>
<keyword id="KW-0560">Oxidoreductase</keyword>
<organism>
    <name type="scientific">Yersinia pestis bv. Antiqua (strain Nepal516)</name>
    <dbReference type="NCBI Taxonomy" id="377628"/>
    <lineage>
        <taxon>Bacteria</taxon>
        <taxon>Pseudomonadati</taxon>
        <taxon>Pseudomonadota</taxon>
        <taxon>Gammaproteobacteria</taxon>
        <taxon>Enterobacterales</taxon>
        <taxon>Yersiniaceae</taxon>
        <taxon>Yersinia</taxon>
    </lineage>
</organism>
<protein>
    <recommendedName>
        <fullName evidence="1">Altronate oxidoreductase</fullName>
        <ecNumber evidence="1">1.1.1.58</ecNumber>
    </recommendedName>
    <alternativeName>
        <fullName evidence="1">Tagaturonate dehydrogenase</fullName>
    </alternativeName>
    <alternativeName>
        <fullName evidence="1">Tagaturonate reductase</fullName>
    </alternativeName>
</protein>
<proteinExistence type="inferred from homology"/>
<feature type="chain" id="PRO_1000044710" description="Altronate oxidoreductase">
    <location>
        <begin position="1"/>
        <end position="483"/>
    </location>
</feature>
<feature type="binding site" evidence="1">
    <location>
        <begin position="18"/>
        <end position="29"/>
    </location>
    <ligand>
        <name>NAD(+)</name>
        <dbReference type="ChEBI" id="CHEBI:57540"/>
    </ligand>
</feature>
<reference key="1">
    <citation type="journal article" date="2006" name="J. Bacteriol.">
        <title>Complete genome sequence of Yersinia pestis strains Antiqua and Nepal516: evidence of gene reduction in an emerging pathogen.</title>
        <authorList>
            <person name="Chain P.S.G."/>
            <person name="Hu P."/>
            <person name="Malfatti S.A."/>
            <person name="Radnedge L."/>
            <person name="Larimer F."/>
            <person name="Vergez L.M."/>
            <person name="Worsham P."/>
            <person name="Chu M.C."/>
            <person name="Andersen G.L."/>
        </authorList>
    </citation>
    <scope>NUCLEOTIDE SEQUENCE [LARGE SCALE GENOMIC DNA]</scope>
    <source>
        <strain>Nepal516</strain>
    </source>
</reference>
<reference key="2">
    <citation type="submission" date="2009-04" db="EMBL/GenBank/DDBJ databases">
        <title>Yersinia pestis Nepal516A whole genome shotgun sequencing project.</title>
        <authorList>
            <person name="Plunkett G. III"/>
            <person name="Anderson B.D."/>
            <person name="Baumler D.J."/>
            <person name="Burland V."/>
            <person name="Cabot E.L."/>
            <person name="Glasner J.D."/>
            <person name="Mau B."/>
            <person name="Neeno-Eckwall E."/>
            <person name="Perna N.T."/>
            <person name="Munk A.C."/>
            <person name="Tapia R."/>
            <person name="Green L.D."/>
            <person name="Rogers Y.C."/>
            <person name="Detter J.C."/>
            <person name="Bruce D.C."/>
            <person name="Brettin T.S."/>
        </authorList>
    </citation>
    <scope>NUCLEOTIDE SEQUENCE [LARGE SCALE GENOMIC DNA]</scope>
    <source>
        <strain>Nepal516</strain>
    </source>
</reference>
<gene>
    <name evidence="1" type="primary">uxaB</name>
    <name type="ordered locus">YPN_0449</name>
    <name type="ORF">YP516_0464</name>
</gene>
<name>UXAB_YERPN</name>
<comment type="catalytic activity">
    <reaction evidence="1">
        <text>D-altronate + NAD(+) = keto-D-tagaturonate + NADH + H(+)</text>
        <dbReference type="Rhea" id="RHEA:17813"/>
        <dbReference type="ChEBI" id="CHEBI:15378"/>
        <dbReference type="ChEBI" id="CHEBI:17360"/>
        <dbReference type="ChEBI" id="CHEBI:17886"/>
        <dbReference type="ChEBI" id="CHEBI:57540"/>
        <dbReference type="ChEBI" id="CHEBI:57945"/>
        <dbReference type="EC" id="1.1.1.58"/>
    </reaction>
</comment>
<comment type="pathway">
    <text evidence="1">Carbohydrate metabolism; pentose and glucuronate interconversion.</text>
</comment>
<comment type="similarity">
    <text evidence="1">Belongs to the mannitol dehydrogenase family. UxaB subfamily.</text>
</comment>
<dbReference type="EC" id="1.1.1.58" evidence="1"/>
<dbReference type="EMBL" id="CP000305">
    <property type="protein sequence ID" value="ABG16781.1"/>
    <property type="molecule type" value="Genomic_DNA"/>
</dbReference>
<dbReference type="EMBL" id="ACNQ01000006">
    <property type="protein sequence ID" value="EEO78237.1"/>
    <property type="molecule type" value="Genomic_DNA"/>
</dbReference>
<dbReference type="RefSeq" id="WP_002210409.1">
    <property type="nucleotide sequence ID" value="NZ_ACNQ01000006.1"/>
</dbReference>
<dbReference type="SMR" id="Q1CMJ9"/>
<dbReference type="KEGG" id="ypn:YPN_0449"/>
<dbReference type="HOGENOM" id="CLU_027324_1_0_6"/>
<dbReference type="UniPathway" id="UPA00246"/>
<dbReference type="Proteomes" id="UP000008936">
    <property type="component" value="Chromosome"/>
</dbReference>
<dbReference type="GO" id="GO:0005829">
    <property type="term" value="C:cytosol"/>
    <property type="evidence" value="ECO:0007669"/>
    <property type="project" value="TreeGrafter"/>
</dbReference>
<dbReference type="GO" id="GO:0008926">
    <property type="term" value="F:mannitol-1-phosphate 5-dehydrogenase activity"/>
    <property type="evidence" value="ECO:0007669"/>
    <property type="project" value="TreeGrafter"/>
</dbReference>
<dbReference type="GO" id="GO:0009026">
    <property type="term" value="F:tagaturonate reductase activity"/>
    <property type="evidence" value="ECO:0007669"/>
    <property type="project" value="UniProtKB-UniRule"/>
</dbReference>
<dbReference type="GO" id="GO:0019698">
    <property type="term" value="P:D-galacturonate catabolic process"/>
    <property type="evidence" value="ECO:0007669"/>
    <property type="project" value="TreeGrafter"/>
</dbReference>
<dbReference type="GO" id="GO:0019592">
    <property type="term" value="P:mannitol catabolic process"/>
    <property type="evidence" value="ECO:0007669"/>
    <property type="project" value="TreeGrafter"/>
</dbReference>
<dbReference type="FunFam" id="3.40.50.720:FF:000153">
    <property type="entry name" value="Altronate oxidoreductase"/>
    <property type="match status" value="1"/>
</dbReference>
<dbReference type="Gene3D" id="1.10.1040.10">
    <property type="entry name" value="N-(1-d-carboxylethyl)-l-norvaline Dehydrogenase, domain 2"/>
    <property type="match status" value="1"/>
</dbReference>
<dbReference type="Gene3D" id="3.40.50.720">
    <property type="entry name" value="NAD(P)-binding Rossmann-like Domain"/>
    <property type="match status" value="1"/>
</dbReference>
<dbReference type="HAMAP" id="MF_00670">
    <property type="entry name" value="Altron_oxidoreduct"/>
    <property type="match status" value="1"/>
</dbReference>
<dbReference type="InterPro" id="IPR008927">
    <property type="entry name" value="6-PGluconate_DH-like_C_sf"/>
</dbReference>
<dbReference type="InterPro" id="IPR013328">
    <property type="entry name" value="6PGD_dom2"/>
</dbReference>
<dbReference type="InterPro" id="IPR023668">
    <property type="entry name" value="Altronate_OxRdtase"/>
</dbReference>
<dbReference type="InterPro" id="IPR013118">
    <property type="entry name" value="Mannitol_DH_C"/>
</dbReference>
<dbReference type="InterPro" id="IPR013131">
    <property type="entry name" value="Mannitol_DH_N"/>
</dbReference>
<dbReference type="InterPro" id="IPR036291">
    <property type="entry name" value="NAD(P)-bd_dom_sf"/>
</dbReference>
<dbReference type="NCBIfam" id="NF002969">
    <property type="entry name" value="PRK03643.1"/>
    <property type="match status" value="1"/>
</dbReference>
<dbReference type="PANTHER" id="PTHR30524:SF0">
    <property type="entry name" value="ALTRONATE OXIDOREDUCTASE-RELATED"/>
    <property type="match status" value="1"/>
</dbReference>
<dbReference type="PANTHER" id="PTHR30524">
    <property type="entry name" value="MANNITOL-1-PHOSPHATE 5-DEHYDROGENASE"/>
    <property type="match status" value="1"/>
</dbReference>
<dbReference type="Pfam" id="PF01232">
    <property type="entry name" value="Mannitol_dh"/>
    <property type="match status" value="1"/>
</dbReference>
<dbReference type="Pfam" id="PF08125">
    <property type="entry name" value="Mannitol_dh_C"/>
    <property type="match status" value="1"/>
</dbReference>
<dbReference type="SUPFAM" id="SSF48179">
    <property type="entry name" value="6-phosphogluconate dehydrogenase C-terminal domain-like"/>
    <property type="match status" value="1"/>
</dbReference>
<dbReference type="SUPFAM" id="SSF51735">
    <property type="entry name" value="NAD(P)-binding Rossmann-fold domains"/>
    <property type="match status" value="1"/>
</dbReference>